<keyword id="KW-0067">ATP-binding</keyword>
<keyword id="KW-0436">Ligase</keyword>
<keyword id="KW-0547">Nucleotide-binding</keyword>
<keyword id="KW-1185">Reference proteome</keyword>
<protein>
    <recommendedName>
        <fullName evidence="1">Putative glutamate--cysteine ligase 2</fullName>
        <ecNumber evidence="1">6.3.2.2</ecNumber>
    </recommendedName>
    <alternativeName>
        <fullName evidence="1">Gamma-glutamylcysteine synthetase 2</fullName>
        <shortName evidence="1">GCS 2</shortName>
        <shortName evidence="1">Gamma-GCS 2</shortName>
    </alternativeName>
</protein>
<name>GCS2_CUPMC</name>
<accession>Q1LHL9</accession>
<organism>
    <name type="scientific">Cupriavidus metallidurans (strain ATCC 43123 / DSM 2839 / NBRC 102507 / CH34)</name>
    <name type="common">Ralstonia metallidurans</name>
    <dbReference type="NCBI Taxonomy" id="266264"/>
    <lineage>
        <taxon>Bacteria</taxon>
        <taxon>Pseudomonadati</taxon>
        <taxon>Pseudomonadota</taxon>
        <taxon>Betaproteobacteria</taxon>
        <taxon>Burkholderiales</taxon>
        <taxon>Burkholderiaceae</taxon>
        <taxon>Cupriavidus</taxon>
    </lineage>
</organism>
<dbReference type="EC" id="6.3.2.2" evidence="1"/>
<dbReference type="EMBL" id="CP000352">
    <property type="protein sequence ID" value="ABF10357.1"/>
    <property type="molecule type" value="Genomic_DNA"/>
</dbReference>
<dbReference type="RefSeq" id="WP_011517914.1">
    <property type="nucleotide sequence ID" value="NC_007973.1"/>
</dbReference>
<dbReference type="SMR" id="Q1LHL9"/>
<dbReference type="STRING" id="266264.Rmet_3485"/>
<dbReference type="KEGG" id="rme:Rmet_3485"/>
<dbReference type="eggNOG" id="COG2170">
    <property type="taxonomic scope" value="Bacteria"/>
</dbReference>
<dbReference type="HOGENOM" id="CLU_044848_1_1_4"/>
<dbReference type="Proteomes" id="UP000002429">
    <property type="component" value="Chromosome"/>
</dbReference>
<dbReference type="GO" id="GO:0005524">
    <property type="term" value="F:ATP binding"/>
    <property type="evidence" value="ECO:0007669"/>
    <property type="project" value="UniProtKB-KW"/>
</dbReference>
<dbReference type="GO" id="GO:0004357">
    <property type="term" value="F:glutamate-cysteine ligase activity"/>
    <property type="evidence" value="ECO:0007669"/>
    <property type="project" value="UniProtKB-EC"/>
</dbReference>
<dbReference type="GO" id="GO:0042398">
    <property type="term" value="P:modified amino acid biosynthetic process"/>
    <property type="evidence" value="ECO:0007669"/>
    <property type="project" value="InterPro"/>
</dbReference>
<dbReference type="Gene3D" id="3.30.590.20">
    <property type="match status" value="1"/>
</dbReference>
<dbReference type="HAMAP" id="MF_01609">
    <property type="entry name" value="Glu_cys_ligase_2"/>
    <property type="match status" value="1"/>
</dbReference>
<dbReference type="InterPro" id="IPR050141">
    <property type="entry name" value="GCL_type2/YbdK_subfam"/>
</dbReference>
<dbReference type="InterPro" id="IPR006336">
    <property type="entry name" value="GCS2"/>
</dbReference>
<dbReference type="InterPro" id="IPR014746">
    <property type="entry name" value="Gln_synth/guanido_kin_cat_dom"/>
</dbReference>
<dbReference type="InterPro" id="IPR011793">
    <property type="entry name" value="YbdK"/>
</dbReference>
<dbReference type="NCBIfam" id="TIGR02050">
    <property type="entry name" value="gshA_cyan_rel"/>
    <property type="match status" value="1"/>
</dbReference>
<dbReference type="NCBIfam" id="NF010040">
    <property type="entry name" value="PRK13516.1"/>
    <property type="match status" value="1"/>
</dbReference>
<dbReference type="PANTHER" id="PTHR36510">
    <property type="entry name" value="GLUTAMATE--CYSTEINE LIGASE 2-RELATED"/>
    <property type="match status" value="1"/>
</dbReference>
<dbReference type="PANTHER" id="PTHR36510:SF1">
    <property type="entry name" value="GLUTAMATE--CYSTEINE LIGASE 2-RELATED"/>
    <property type="match status" value="1"/>
</dbReference>
<dbReference type="Pfam" id="PF04107">
    <property type="entry name" value="GCS2"/>
    <property type="match status" value="1"/>
</dbReference>
<dbReference type="SUPFAM" id="SSF55931">
    <property type="entry name" value="Glutamine synthetase/guanido kinase"/>
    <property type="match status" value="1"/>
</dbReference>
<gene>
    <name type="ordered locus">Rmet_3485</name>
</gene>
<comment type="function">
    <text evidence="1">ATP-dependent carboxylate-amine ligase which exhibits weak glutamate--cysteine ligase activity.</text>
</comment>
<comment type="catalytic activity">
    <reaction evidence="1">
        <text>L-cysteine + L-glutamate + ATP = gamma-L-glutamyl-L-cysteine + ADP + phosphate + H(+)</text>
        <dbReference type="Rhea" id="RHEA:13285"/>
        <dbReference type="ChEBI" id="CHEBI:15378"/>
        <dbReference type="ChEBI" id="CHEBI:29985"/>
        <dbReference type="ChEBI" id="CHEBI:30616"/>
        <dbReference type="ChEBI" id="CHEBI:35235"/>
        <dbReference type="ChEBI" id="CHEBI:43474"/>
        <dbReference type="ChEBI" id="CHEBI:58173"/>
        <dbReference type="ChEBI" id="CHEBI:456216"/>
        <dbReference type="EC" id="6.3.2.2"/>
    </reaction>
</comment>
<comment type="similarity">
    <text evidence="1">Belongs to the glutamate--cysteine ligase type 2 family. YbdK subfamily.</text>
</comment>
<evidence type="ECO:0000255" key="1">
    <source>
        <dbReference type="HAMAP-Rule" id="MF_01609"/>
    </source>
</evidence>
<proteinExistence type="inferred from homology"/>
<sequence length="372" mass="41653">MSLEPFKHSEALTFGVELELQLVNRHDYDLAPFAPDLLRALRGTQHAGDIKPEISPSMIEISTGICHDYAQALEELSVMRDLMVNASRGLNLGICGGGTHPFQVWSDRTISDSPRYQYISELYGYLAKQFTVFGQHVHIGCPSPDESLFLLHAIGRYVPHFIALAASSPYVQGVDTGFASARLNSVAAFPMSGRAPFVLTWDAFKAYFDKMRATGVIESMKDFYWDIRPKPEFGTIEVRVMDTPLTVQRACDIAAYIQALARYLLLSRPFMPQEDDYLVYTFNRFQACRFGLEGEYVHPNELTRMPIADHILSICDALEPHAEALGSLEALSNIRALAASRSNDAHWVRAANRDAHSLRDMVRQTCEQWGGG</sequence>
<reference key="1">
    <citation type="journal article" date="2010" name="PLoS ONE">
        <title>The complete genome sequence of Cupriavidus metallidurans strain CH34, a master survivalist in harsh and anthropogenic environments.</title>
        <authorList>
            <person name="Janssen P.J."/>
            <person name="Van Houdt R."/>
            <person name="Moors H."/>
            <person name="Monsieurs P."/>
            <person name="Morin N."/>
            <person name="Michaux A."/>
            <person name="Benotmane M.A."/>
            <person name="Leys N."/>
            <person name="Vallaeys T."/>
            <person name="Lapidus A."/>
            <person name="Monchy S."/>
            <person name="Medigue C."/>
            <person name="Taghavi S."/>
            <person name="McCorkle S."/>
            <person name="Dunn J."/>
            <person name="van der Lelie D."/>
            <person name="Mergeay M."/>
        </authorList>
    </citation>
    <scope>NUCLEOTIDE SEQUENCE [LARGE SCALE GENOMIC DNA]</scope>
    <source>
        <strain>ATCC 43123 / DSM 2839 / NBRC 102507 / CH34</strain>
    </source>
</reference>
<feature type="chain" id="PRO_0000255807" description="Putative glutamate--cysteine ligase 2">
    <location>
        <begin position="1"/>
        <end position="372"/>
    </location>
</feature>